<reference key="1">
    <citation type="journal article" date="2015" name="J. Biol. Chem.">
        <title>Variable substrate preference among phospholipase D toxins from Sicariid spiders.</title>
        <authorList>
            <person name="Lajoie D.M."/>
            <person name="Roberts S.A."/>
            <person name="Zobel-Thropp P.A."/>
            <person name="Delahaye J.L."/>
            <person name="Bandarian V."/>
            <person name="Binford G.J."/>
            <person name="Cordes M.H."/>
        </authorList>
    </citation>
    <scope>NUCLEOTIDE SEQUENCE [MRNA]</scope>
    <scope>X-RAY CRYSTALLOGRAPHY (2.14 ANGSTROMS) IN COMPLEX WITH MAGNESIUM</scope>
    <scope>DISULFIDE BOND</scope>
    <scope>CATALYTIC ACTIVITY</scope>
    <scope>FUNCTION</scope>
    <scope>MUTAGENESIS OF ASN-96; GLU-135 AND GLY-192</scope>
    <scope>COFACTOR</scope>
    <source>
        <tissue>Venom gland</tissue>
    </source>
</reference>
<reference key="2">
    <citation type="journal article" date="2006" name="Biochem. Biophys. Res. Commun.">
        <title>Structural insights into the catalytic mechanism of sphingomyelinases D and evolutionary relationship to glycerophosphodiester phosphodiesterases.</title>
        <authorList>
            <person name="Murakami M.T."/>
            <person name="Fernandes-Pedrosa M.F."/>
            <person name="de Andrade S.A."/>
            <person name="Gabdoulkhakov A."/>
            <person name="Betzel C."/>
            <person name="Tambourgi D.V."/>
            <person name="Arni R.K."/>
        </authorList>
    </citation>
    <scope>IMPORTANT SITES FOR ACTIVITY ON SPHINGOMYELIN</scope>
</reference>
<dbReference type="EC" id="4.6.1.-" evidence="4"/>
<dbReference type="EMBL" id="KM884813">
    <property type="protein sequence ID" value="AJV88488.1"/>
    <property type="molecule type" value="mRNA"/>
</dbReference>
<dbReference type="PDB" id="4Q6X">
    <property type="method" value="X-ray"/>
    <property type="resolution" value="2.14 A"/>
    <property type="chains" value="A=1-279"/>
</dbReference>
<dbReference type="PDBsum" id="4Q6X"/>
<dbReference type="SMR" id="A0A0D4WV12"/>
<dbReference type="SwissLipids" id="SLP:000001962"/>
<dbReference type="BRENDA" id="3.1.4.4">
    <property type="organism ID" value="16541"/>
</dbReference>
<dbReference type="EvolutionaryTrace" id="A0A0D4WV12"/>
<dbReference type="GO" id="GO:0005576">
    <property type="term" value="C:extracellular region"/>
    <property type="evidence" value="ECO:0007669"/>
    <property type="project" value="UniProtKB-SubCell"/>
</dbReference>
<dbReference type="GO" id="GO:0016829">
    <property type="term" value="F:lyase activity"/>
    <property type="evidence" value="ECO:0007669"/>
    <property type="project" value="UniProtKB-KW"/>
</dbReference>
<dbReference type="GO" id="GO:0046872">
    <property type="term" value="F:metal ion binding"/>
    <property type="evidence" value="ECO:0007669"/>
    <property type="project" value="UniProtKB-KW"/>
</dbReference>
<dbReference type="GO" id="GO:0008081">
    <property type="term" value="F:phosphoric diester hydrolase activity"/>
    <property type="evidence" value="ECO:0007669"/>
    <property type="project" value="InterPro"/>
</dbReference>
<dbReference type="GO" id="GO:0090729">
    <property type="term" value="F:toxin activity"/>
    <property type="evidence" value="ECO:0007669"/>
    <property type="project" value="UniProtKB-KW"/>
</dbReference>
<dbReference type="GO" id="GO:0031640">
    <property type="term" value="P:killing of cells of another organism"/>
    <property type="evidence" value="ECO:0007669"/>
    <property type="project" value="UniProtKB-KW"/>
</dbReference>
<dbReference type="GO" id="GO:0016042">
    <property type="term" value="P:lipid catabolic process"/>
    <property type="evidence" value="ECO:0007669"/>
    <property type="project" value="UniProtKB-KW"/>
</dbReference>
<dbReference type="CDD" id="cd08576">
    <property type="entry name" value="GDPD_like_SMaseD_PLD"/>
    <property type="match status" value="1"/>
</dbReference>
<dbReference type="Gene3D" id="3.20.20.190">
    <property type="entry name" value="Phosphatidylinositol (PI) phosphodiesterase"/>
    <property type="match status" value="1"/>
</dbReference>
<dbReference type="InterPro" id="IPR017946">
    <property type="entry name" value="PLC-like_Pdiesterase_TIM-brl"/>
</dbReference>
<dbReference type="Pfam" id="PF13653">
    <property type="entry name" value="GDPD_2"/>
    <property type="match status" value="1"/>
</dbReference>
<dbReference type="SUPFAM" id="SSF51695">
    <property type="entry name" value="PLC-like phosphodiesterases"/>
    <property type="match status" value="1"/>
</dbReference>
<comment type="function">
    <text evidence="1 4">Dermonecrotic toxins cleave the phosphodiester linkage between the phosphate and headgroup of certain phospholipids (sphingolipid and lysolipid substrates), forming an alcohol (often choline) and a cyclic phosphate (PubMed:25752604). This toxin acts on lysophosphatidylethanolamine (LPE) and ceramide phosphoethanolamine (CPE) with high activity (PubMed:25752604). This toxin acts on sphingomyelin (SM) with very low activity and is not active on lysophosphatidylserine (LPS), lysophosphatidylcholine (LPC) and lysophosphatidylglycerol (LPG) (PubMed:25752604). It acts by transphosphatidylation, releasing exclusively cyclic phosphate as second products (PubMed:25752604). It is not surprising that spider toxins have affinity for ethanolamine-containing sphingolipids since they are common in insect prey (PubMed:25752604). Induces dermonecrosis, hemolysis, increased vascular permeability, edema, inflammatory response, and platelet aggregation (By similarity).</text>
</comment>
<comment type="catalytic activity">
    <reaction evidence="4">
        <text>an N-(acyl)-sphingosylphosphocholine = an N-(acyl)-sphingosyl-1,3-cyclic phosphate + choline</text>
        <dbReference type="Rhea" id="RHEA:60652"/>
        <dbReference type="ChEBI" id="CHEBI:15354"/>
        <dbReference type="ChEBI" id="CHEBI:64583"/>
        <dbReference type="ChEBI" id="CHEBI:143892"/>
    </reaction>
</comment>
<comment type="catalytic activity">
    <reaction evidence="4">
        <text>N-hexanoyl-sphing-4-enine-1-phosphocholine = N-(hexanoyl)-sphing-4-enine-1,3-cyclic phosphate + choline</text>
        <dbReference type="Rhea" id="RHEA:60620"/>
        <dbReference type="ChEBI" id="CHEBI:15354"/>
        <dbReference type="ChEBI" id="CHEBI:78254"/>
        <dbReference type="ChEBI" id="CHEBI:143883"/>
    </reaction>
</comment>
<comment type="catalytic activity">
    <reaction evidence="4">
        <text>an N-(acyl)-sphingosylphosphoethanolamine = an N-(acyl)-sphingosyl-1,3-cyclic phosphate + ethanolamine</text>
        <dbReference type="Rhea" id="RHEA:60648"/>
        <dbReference type="ChEBI" id="CHEBI:57603"/>
        <dbReference type="ChEBI" id="CHEBI:143891"/>
        <dbReference type="ChEBI" id="CHEBI:143892"/>
    </reaction>
</comment>
<comment type="catalytic activity">
    <reaction evidence="4">
        <text>N-dodecanoyl-heptadecasphing-4-enine-1-phosphoethanolamine = N-dodecanoyl-heptadecasphing-4-enine-1,3-cyclic phosphate + ethanolamine</text>
        <dbReference type="Rhea" id="RHEA:60616"/>
        <dbReference type="ChEBI" id="CHEBI:57603"/>
        <dbReference type="ChEBI" id="CHEBI:143864"/>
        <dbReference type="ChEBI" id="CHEBI:143865"/>
    </reaction>
</comment>
<comment type="catalytic activity">
    <reaction evidence="4">
        <text>a 1-acyl-sn-glycero-3-phosphoethanolamine = a 1-acyl-sn-glycero-2,3-cyclic phosphate + ethanolamine</text>
        <dbReference type="Rhea" id="RHEA:60704"/>
        <dbReference type="ChEBI" id="CHEBI:57603"/>
        <dbReference type="ChEBI" id="CHEBI:64381"/>
        <dbReference type="ChEBI" id="CHEBI:143947"/>
    </reaction>
</comment>
<comment type="catalytic activity">
    <reaction evidence="4">
        <text>1-tetradecanoyl-sn-glycero-3-phosphoethanolamine = 1-tetradecanoyl-sn-glycero-2,3-cyclic phosphate + ethanolamine</text>
        <dbReference type="Rhea" id="RHEA:60608"/>
        <dbReference type="ChEBI" id="CHEBI:57603"/>
        <dbReference type="ChEBI" id="CHEBI:84299"/>
        <dbReference type="ChEBI" id="CHEBI:143882"/>
    </reaction>
</comment>
<comment type="cofactor">
    <cofactor evidence="4 9">
        <name>Mg(2+)</name>
        <dbReference type="ChEBI" id="CHEBI:18420"/>
    </cofactor>
    <text evidence="4 9">Binds 1 Mg(2+) ion per subunit.</text>
</comment>
<comment type="subcellular location">
    <subcellularLocation>
        <location evidence="8">Secreted</location>
    </subcellularLocation>
</comment>
<comment type="tissue specificity">
    <text evidence="8">Expressed by the venom gland.</text>
</comment>
<comment type="similarity">
    <text evidence="6">Belongs to the arthropod phospholipase D family. Class II subfamily. Class IIb sub-subfamily.</text>
</comment>
<comment type="caution">
    <text evidence="2 4">The most common activity assay for dermonecrotic toxins detects enzymatic activity by monitoring choline release from substrate. Liberation of choline from sphingomyelin (SM) or lysophosphatidylcholine (LPC) is commonly assumed to result from substrate hydrolysis, giving either ceramide-1-phosphate (C1P) or lysophosphatidic acid (LPA), respectively, as a second product. However, two studies from Lajoie and colleagues (2013 and 2015) report the observation of exclusive formation of cyclic phosphate products as second products, resulting from intramolecular transphosphatidylation. Cyclic phosphates have vastly different biological properties from their monoester counterparts, and they may be relevant to the pathology of brown spider envenomation.</text>
</comment>
<evidence type="ECO:0000250" key="1">
    <source>
        <dbReference type="UniProtKB" id="P0CE80"/>
    </source>
</evidence>
<evidence type="ECO:0000250" key="2">
    <source>
        <dbReference type="UniProtKB" id="Q4ZFU2"/>
    </source>
</evidence>
<evidence type="ECO:0000250" key="3">
    <source>
        <dbReference type="UniProtKB" id="Q8I914"/>
    </source>
</evidence>
<evidence type="ECO:0000269" key="4">
    <source>
    </source>
</evidence>
<evidence type="ECO:0000303" key="5">
    <source>
    </source>
</evidence>
<evidence type="ECO:0000305" key="6"/>
<evidence type="ECO:0000305" key="7">
    <source>
    </source>
</evidence>
<evidence type="ECO:0000305" key="8">
    <source>
    </source>
</evidence>
<evidence type="ECO:0000312" key="9">
    <source>
        <dbReference type="PDB" id="4Q6X"/>
    </source>
</evidence>
<evidence type="ECO:0007829" key="10">
    <source>
        <dbReference type="PDB" id="4Q6X"/>
    </source>
</evidence>
<organism>
    <name type="scientific">Sicarius terrosus</name>
    <name type="common">Cave spider</name>
    <dbReference type="NCBI Taxonomy" id="571544"/>
    <lineage>
        <taxon>Eukaryota</taxon>
        <taxon>Metazoa</taxon>
        <taxon>Ecdysozoa</taxon>
        <taxon>Arthropoda</taxon>
        <taxon>Chelicerata</taxon>
        <taxon>Arachnida</taxon>
        <taxon>Araneae</taxon>
        <taxon>Araneomorphae</taxon>
        <taxon>Haplogynae</taxon>
        <taxon>Scytodoidea</taxon>
        <taxon>Sicariidae</taxon>
        <taxon>Sicarius</taxon>
    </lineage>
</organism>
<keyword id="KW-0002">3D-structure</keyword>
<keyword id="KW-0204">Cytolysis</keyword>
<keyword id="KW-1061">Dermonecrotic toxin</keyword>
<keyword id="KW-1015">Disulfide bond</keyword>
<keyword id="KW-0354">Hemolysis</keyword>
<keyword id="KW-0442">Lipid degradation</keyword>
<keyword id="KW-0443">Lipid metabolism</keyword>
<keyword id="KW-0456">Lyase</keyword>
<keyword id="KW-0460">Magnesium</keyword>
<keyword id="KW-0479">Metal-binding</keyword>
<keyword id="KW-0964">Secreted</keyword>
<keyword id="KW-0800">Toxin</keyword>
<keyword id="KW-0865">Zymogen</keyword>
<accession>A0A0D4WV12</accession>
<protein>
    <recommendedName>
        <fullName evidence="5">Dermonecrotic toxin StSicTox-betaIB1i</fullName>
        <ecNumber evidence="4">4.6.1.-</ecNumber>
    </recommendedName>
    <alternativeName>
        <fullName>Phospholipase D</fullName>
        <shortName>PLD</shortName>
    </alternativeName>
    <alternativeName>
        <fullName>Sphingomyelin phosphodiesterase D</fullName>
        <shortName>SMD</shortName>
        <shortName>SMase D</shortName>
        <shortName>Sphingomyelinase D</shortName>
    </alternativeName>
</protein>
<feature type="chain" id="PRO_0000447765" description="Dermonecrotic toxin StSicTox-betaIB1i">
    <location>
        <begin position="1"/>
        <end position="279"/>
    </location>
</feature>
<feature type="active site" evidence="3">
    <location>
        <position position="12"/>
    </location>
</feature>
<feature type="active site" description="Nucleophile" evidence="3">
    <location>
        <position position="48"/>
    </location>
</feature>
<feature type="binding site" evidence="4 9">
    <location>
        <position position="32"/>
    </location>
    <ligand>
        <name>Mg(2+)</name>
        <dbReference type="ChEBI" id="CHEBI:18420"/>
    </ligand>
</feature>
<feature type="binding site" evidence="4 9">
    <location>
        <position position="34"/>
    </location>
    <ligand>
        <name>Mg(2+)</name>
        <dbReference type="ChEBI" id="CHEBI:18420"/>
    </ligand>
</feature>
<feature type="binding site" evidence="4 9">
    <location>
        <position position="92"/>
    </location>
    <ligand>
        <name>Mg(2+)</name>
        <dbReference type="ChEBI" id="CHEBI:18420"/>
    </ligand>
</feature>
<feature type="site" description="May prevent sphingomyelin recognition" evidence="7">
    <location>
        <position position="96"/>
    </location>
</feature>
<feature type="site" description="May prevent sphingomyelin recognition" evidence="7">
    <location>
        <position position="135"/>
    </location>
</feature>
<feature type="disulfide bond" evidence="4 9">
    <location>
        <begin position="52"/>
        <end position="58"/>
    </location>
</feature>
<feature type="disulfide bond" evidence="4 9">
    <location>
        <begin position="54"/>
        <end position="198"/>
    </location>
</feature>
<feature type="mutagenesis site" description="Has limited impact on substrate specificity and does not alter it qualitatively; when associated with P-135." evidence="4">
    <original>N</original>
    <variation>S</variation>
    <location>
        <position position="96"/>
    </location>
</feature>
<feature type="mutagenesis site" description="Has limited impact on substrate specificity and does not alter it qualitatively; when associated with S-192. Has limited impact on substrate specificity and does not alter it qualitatively; when associated with S-96." evidence="4">
    <original>E</original>
    <variation>P</variation>
    <location>
        <position position="135"/>
    </location>
</feature>
<feature type="mutagenesis site" description="Has limited impact on substrate specificity and does not alter it qualitatively; when associated with P-135." evidence="4">
    <original>G</original>
    <variation>S</variation>
    <location>
        <position position="192"/>
    </location>
</feature>
<feature type="strand" evidence="10">
    <location>
        <begin position="4"/>
        <end position="12"/>
    </location>
</feature>
<feature type="helix" evidence="10">
    <location>
        <begin position="17"/>
        <end position="25"/>
    </location>
</feature>
<feature type="strand" evidence="10">
    <location>
        <begin position="29"/>
        <end position="37"/>
    </location>
</feature>
<feature type="strand" evidence="10">
    <location>
        <begin position="43"/>
        <end position="47"/>
    </location>
</feature>
<feature type="strand" evidence="10">
    <location>
        <begin position="53"/>
        <end position="55"/>
    </location>
</feature>
<feature type="strand" evidence="10">
    <location>
        <begin position="61"/>
        <end position="63"/>
    </location>
</feature>
<feature type="helix" evidence="10">
    <location>
        <begin position="64"/>
        <end position="74"/>
    </location>
</feature>
<feature type="strand" evidence="10">
    <location>
        <begin position="88"/>
        <end position="93"/>
    </location>
</feature>
<feature type="helix" evidence="10">
    <location>
        <begin position="100"/>
        <end position="117"/>
    </location>
</feature>
<feature type="helix" evidence="10">
    <location>
        <begin position="120"/>
        <end position="122"/>
    </location>
</feature>
<feature type="strand" evidence="10">
    <location>
        <begin position="129"/>
        <end position="135"/>
    </location>
</feature>
<feature type="helix" evidence="10">
    <location>
        <begin position="137"/>
        <end position="140"/>
    </location>
</feature>
<feature type="helix" evidence="10">
    <location>
        <begin position="141"/>
        <end position="152"/>
    </location>
</feature>
<feature type="helix" evidence="10">
    <location>
        <begin position="156"/>
        <end position="159"/>
    </location>
</feature>
<feature type="helix" evidence="10">
    <location>
        <begin position="160"/>
        <end position="162"/>
    </location>
</feature>
<feature type="strand" evidence="10">
    <location>
        <begin position="163"/>
        <end position="167"/>
    </location>
</feature>
<feature type="helix" evidence="10">
    <location>
        <begin position="173"/>
        <end position="182"/>
    </location>
</feature>
<feature type="strand" evidence="10">
    <location>
        <begin position="187"/>
        <end position="194"/>
    </location>
</feature>
<feature type="helix" evidence="10">
    <location>
        <begin position="204"/>
        <end position="214"/>
    </location>
</feature>
<feature type="strand" evidence="10">
    <location>
        <begin position="222"/>
        <end position="227"/>
    </location>
</feature>
<feature type="helix" evidence="10">
    <location>
        <begin position="232"/>
        <end position="240"/>
    </location>
</feature>
<feature type="strand" evidence="10">
    <location>
        <begin position="244"/>
        <end position="249"/>
    </location>
</feature>
<feature type="helix" evidence="10">
    <location>
        <begin position="251"/>
        <end position="258"/>
    </location>
</feature>
<feature type="helix" evidence="10">
    <location>
        <begin position="261"/>
        <end position="264"/>
    </location>
</feature>
<feature type="strand" evidence="10">
    <location>
        <begin position="267"/>
        <end position="269"/>
    </location>
</feature>
<proteinExistence type="evidence at protein level"/>
<name>BIB11_SICTE</name>
<sequence length="279" mass="31815">GDSRRPIWNIAHMVNDLDLVDEYLDDGANSLELDVEFSKSGTALRTYHGVPCDCFRSCTRSEKFSKYLDYIRQLTTPGNSKFRSRLILLVLDLKLNPLSSSAAYNAGADVARNLLDNYWQRGDSKARAYIVLSLETIAGAEFITGFKDTMKKEGFDEKYYDKIGWDFSGNEDLGKIRDVLESHGIREHIWQGDGITNCLPRDDNRLKQAISRRYSPTYVYADKVYTWSIDKESSIENALRLGVDGVMTNYPARVISVLGEREFSGKLRLATYDDNPWEK</sequence>